<protein>
    <recommendedName>
        <fullName evidence="3">Large ribosomal subunit protein eL27</fullName>
    </recommendedName>
    <alternativeName>
        <fullName>60S ribosomal protein L27</fullName>
    </alternativeName>
</protein>
<evidence type="ECO:0000250" key="1">
    <source>
        <dbReference type="UniProtKB" id="A1XQU5"/>
    </source>
</evidence>
<evidence type="ECO:0000250" key="2">
    <source>
        <dbReference type="UniProtKB" id="P61353"/>
    </source>
</evidence>
<evidence type="ECO:0000305" key="3"/>
<name>RL27_CERNI</name>
<dbReference type="EMBL" id="AF373231">
    <property type="protein sequence ID" value="AAK51562.1"/>
    <property type="molecule type" value="mRNA"/>
</dbReference>
<dbReference type="SMR" id="P61357"/>
<dbReference type="GO" id="GO:0098556">
    <property type="term" value="C:cytoplasmic side of rough endoplasmic reticulum membrane"/>
    <property type="evidence" value="ECO:0000250"/>
    <property type="project" value="UniProtKB"/>
</dbReference>
<dbReference type="GO" id="GO:0005829">
    <property type="term" value="C:cytosol"/>
    <property type="evidence" value="ECO:0007669"/>
    <property type="project" value="UniProtKB-SubCell"/>
</dbReference>
<dbReference type="GO" id="GO:0015934">
    <property type="term" value="C:large ribosomal subunit"/>
    <property type="evidence" value="ECO:0000250"/>
    <property type="project" value="UniProtKB"/>
</dbReference>
<dbReference type="GO" id="GO:0003735">
    <property type="term" value="F:structural constituent of ribosome"/>
    <property type="evidence" value="ECO:0007669"/>
    <property type="project" value="InterPro"/>
</dbReference>
<dbReference type="GO" id="GO:0006364">
    <property type="term" value="P:rRNA processing"/>
    <property type="evidence" value="ECO:0000250"/>
    <property type="project" value="UniProtKB"/>
</dbReference>
<dbReference type="GO" id="GO:0006412">
    <property type="term" value="P:translation"/>
    <property type="evidence" value="ECO:0007669"/>
    <property type="project" value="InterPro"/>
</dbReference>
<dbReference type="CDD" id="cd06090">
    <property type="entry name" value="KOW_RPL27"/>
    <property type="match status" value="1"/>
</dbReference>
<dbReference type="FunFam" id="2.30.30.770:FF:000001">
    <property type="entry name" value="60S ribosomal protein L27"/>
    <property type="match status" value="1"/>
</dbReference>
<dbReference type="Gene3D" id="2.30.30.770">
    <property type="match status" value="1"/>
</dbReference>
<dbReference type="InterPro" id="IPR005824">
    <property type="entry name" value="KOW"/>
</dbReference>
<dbReference type="InterPro" id="IPR001141">
    <property type="entry name" value="Ribosomal_eL27"/>
</dbReference>
<dbReference type="InterPro" id="IPR018262">
    <property type="entry name" value="Ribosomal_eL27_CS"/>
</dbReference>
<dbReference type="InterPro" id="IPR041991">
    <property type="entry name" value="Ribosomal_eL27_KOW"/>
</dbReference>
<dbReference type="InterPro" id="IPR038655">
    <property type="entry name" value="Ribosomal_eL27_sf"/>
</dbReference>
<dbReference type="InterPro" id="IPR008991">
    <property type="entry name" value="Translation_prot_SH3-like_sf"/>
</dbReference>
<dbReference type="PANTHER" id="PTHR10497">
    <property type="entry name" value="60S RIBOSOMAL PROTEIN L27"/>
    <property type="match status" value="1"/>
</dbReference>
<dbReference type="Pfam" id="PF00467">
    <property type="entry name" value="KOW"/>
    <property type="match status" value="1"/>
</dbReference>
<dbReference type="Pfam" id="PF01777">
    <property type="entry name" value="Ribosomal_L27e"/>
    <property type="match status" value="1"/>
</dbReference>
<dbReference type="SMART" id="SM00739">
    <property type="entry name" value="KOW"/>
    <property type="match status" value="1"/>
</dbReference>
<dbReference type="SUPFAM" id="SSF50104">
    <property type="entry name" value="Translation proteins SH3-like domain"/>
    <property type="match status" value="1"/>
</dbReference>
<dbReference type="PROSITE" id="PS01107">
    <property type="entry name" value="RIBOSOMAL_L27E"/>
    <property type="match status" value="1"/>
</dbReference>
<accession>P61357</accession>
<reference key="1">
    <citation type="submission" date="2001-04" db="EMBL/GenBank/DDBJ databases">
        <title>Cloning of a novel cDNA encoding Shuangyang sika deer ribosomal protein L27.</title>
        <authorList>
            <person name="Wei Z."/>
            <person name="Chen Y."/>
            <person name="Yu Y."/>
        </authorList>
    </citation>
    <scope>NUCLEOTIDE SEQUENCE [MRNA]</scope>
    <source>
        <strain>Shuangyang</strain>
    </source>
</reference>
<sequence length="136" mass="15798">MGKFMKPGKVVLVLAGRYSGRKAVIVKNIDDGTSDRPYSHALVAGIDRYPRKVTAAMGKKKIAKRSKIKSFVKVYNYNHLMPTRYSVDIPLDKTVVNKDVFRDPALKRKARREAKVKFEERYKTGKNKWFFQKLRF</sequence>
<comment type="function">
    <text evidence="2">Component of the large ribosomal subunit (By similarity). Required for proper rRNA processing and maturation of 28S and 5.8S rRNAs (By similarity).</text>
</comment>
<comment type="subunit">
    <text evidence="1 2">Component of the large ribosomal subunit (By similarity). Interacts with RRP1B (By similarity). Component of the large ribosomal subunit. Interacts with RRP1B. Interacts with DHX33 (By similarity).</text>
</comment>
<comment type="subcellular location">
    <subcellularLocation>
        <location evidence="2">Cytoplasm</location>
        <location evidence="2">Cytosol</location>
    </subcellularLocation>
    <subcellularLocation>
        <location evidence="2">Cytoplasm</location>
    </subcellularLocation>
    <subcellularLocation>
        <location evidence="1">Rough endoplasmic reticulum</location>
    </subcellularLocation>
    <text evidence="1 2">Detected on cytosolic polysomes (By similarity). Detected in ribosomes that are associated with the rough endoplasmic reticulum (By similarity).</text>
</comment>
<comment type="similarity">
    <text evidence="3">Belongs to the eukaryotic ribosomal protein eL27 family.</text>
</comment>
<keyword id="KW-0007">Acetylation</keyword>
<keyword id="KW-0963">Cytoplasm</keyword>
<keyword id="KW-0256">Endoplasmic reticulum</keyword>
<keyword id="KW-0687">Ribonucleoprotein</keyword>
<keyword id="KW-0689">Ribosomal protein</keyword>
<gene>
    <name type="primary">RPL27</name>
</gene>
<organism>
    <name type="scientific">Cervus nippon</name>
    <name type="common">Sika deer</name>
    <dbReference type="NCBI Taxonomy" id="9863"/>
    <lineage>
        <taxon>Eukaryota</taxon>
        <taxon>Metazoa</taxon>
        <taxon>Chordata</taxon>
        <taxon>Craniata</taxon>
        <taxon>Vertebrata</taxon>
        <taxon>Euteleostomi</taxon>
        <taxon>Mammalia</taxon>
        <taxon>Eutheria</taxon>
        <taxon>Laurasiatheria</taxon>
        <taxon>Artiodactyla</taxon>
        <taxon>Ruminantia</taxon>
        <taxon>Pecora</taxon>
        <taxon>Cervidae</taxon>
        <taxon>Cervinae</taxon>
        <taxon>Cervus</taxon>
    </lineage>
</organism>
<proteinExistence type="evidence at transcript level"/>
<feature type="chain" id="PRO_0000126076" description="Large ribosomal subunit protein eL27">
    <location>
        <begin position="1"/>
        <end position="136"/>
    </location>
</feature>
<feature type="domain" description="KOW">
    <location>
        <begin position="5"/>
        <end position="40"/>
    </location>
</feature>
<feature type="modified residue" description="N6-acetyllysine" evidence="2">
    <location>
        <position position="27"/>
    </location>
</feature>
<feature type="modified residue" description="N6-acetyllysine" evidence="2">
    <location>
        <position position="93"/>
    </location>
</feature>